<sequence>MEGEELIYHNIINEILVGYIKYYINDISEHELSPYQQQIKKILTYYDECLNKQVTITFSLTSVQEIKTQFTGVVTELFKDLINWGRICGFIVFSAKMAKYCKDANNHLESTVITTAYNFMKHNLLPWMISHGGQEEFLAFSLHSDMYSVIFNIKYFLSKFCNHMFFRSCVQLLRNCNLI</sequence>
<dbReference type="EMBL" id="U18466">
    <property type="protein sequence ID" value="AAA65271.1"/>
    <property type="molecule type" value="Genomic_DNA"/>
</dbReference>
<dbReference type="RefSeq" id="NP_042735.1">
    <property type="nucleotide sequence ID" value="NC_001659.2"/>
</dbReference>
<dbReference type="PDB" id="5UA4">
    <property type="method" value="X-ray"/>
    <property type="resolution" value="2.60 A"/>
    <property type="chains" value="A=1-148"/>
</dbReference>
<dbReference type="PDB" id="5UA5">
    <property type="method" value="X-ray"/>
    <property type="resolution" value="2.50 A"/>
    <property type="chains" value="A=1-148"/>
</dbReference>
<dbReference type="PDB" id="6TZC">
    <property type="method" value="X-ray"/>
    <property type="resolution" value="2.41 A"/>
    <property type="chains" value="B=1-148"/>
</dbReference>
<dbReference type="PDBsum" id="5UA4"/>
<dbReference type="PDBsum" id="5UA5"/>
<dbReference type="PDBsum" id="6TZC"/>
<dbReference type="SMR" id="P42485"/>
<dbReference type="GeneID" id="22220423"/>
<dbReference type="KEGG" id="vg:22220423"/>
<dbReference type="Proteomes" id="UP000000624">
    <property type="component" value="Segment"/>
</dbReference>
<dbReference type="GO" id="GO:0044165">
    <property type="term" value="C:host cell endoplasmic reticulum"/>
    <property type="evidence" value="ECO:0007669"/>
    <property type="project" value="UniProtKB-SubCell"/>
</dbReference>
<dbReference type="GO" id="GO:0033650">
    <property type="term" value="C:host cell mitochondrion"/>
    <property type="evidence" value="ECO:0007669"/>
    <property type="project" value="UniProtKB-SubCell"/>
</dbReference>
<dbReference type="GO" id="GO:0051400">
    <property type="term" value="F:BH domain binding"/>
    <property type="evidence" value="ECO:0007669"/>
    <property type="project" value="TreeGrafter"/>
</dbReference>
<dbReference type="GO" id="GO:0042981">
    <property type="term" value="P:regulation of apoptotic process"/>
    <property type="evidence" value="ECO:0007669"/>
    <property type="project" value="InterPro"/>
</dbReference>
<dbReference type="GO" id="GO:0033668">
    <property type="term" value="P:symbiont-mediated suppression of host apoptosis"/>
    <property type="evidence" value="ECO:0007669"/>
    <property type="project" value="UniProtKB-KW"/>
</dbReference>
<dbReference type="GO" id="GO:0140321">
    <property type="term" value="P:symbiont-mediated suppression of host autophagy"/>
    <property type="evidence" value="ECO:0000269"/>
    <property type="project" value="SigSci"/>
</dbReference>
<dbReference type="Gene3D" id="1.10.437.10">
    <property type="entry name" value="Blc2-like"/>
    <property type="match status" value="1"/>
</dbReference>
<dbReference type="InterPro" id="IPR036834">
    <property type="entry name" value="Bcl-2-like_sf"/>
</dbReference>
<dbReference type="InterPro" id="IPR046371">
    <property type="entry name" value="Bcl-2_BH1-3"/>
</dbReference>
<dbReference type="InterPro" id="IPR026298">
    <property type="entry name" value="Bcl-2_fam"/>
</dbReference>
<dbReference type="InterPro" id="IPR002475">
    <property type="entry name" value="Bcl2-like"/>
</dbReference>
<dbReference type="InterPro" id="IPR020717">
    <property type="entry name" value="Bcl2_BH1_motif_CS"/>
</dbReference>
<dbReference type="InterPro" id="IPR020726">
    <property type="entry name" value="Bcl2_BH2_motif_CS"/>
</dbReference>
<dbReference type="PANTHER" id="PTHR11256:SF62">
    <property type="entry name" value="BCL-2 BCL-2 HOMOLOGY REGION 1-3 DOMAIN-CONTAINING PROTEIN"/>
    <property type="match status" value="1"/>
</dbReference>
<dbReference type="PANTHER" id="PTHR11256">
    <property type="entry name" value="BCL-2 RELATED"/>
    <property type="match status" value="1"/>
</dbReference>
<dbReference type="Pfam" id="PF00452">
    <property type="entry name" value="Bcl-2"/>
    <property type="match status" value="1"/>
</dbReference>
<dbReference type="PRINTS" id="PR01862">
    <property type="entry name" value="BCL2FAMILY"/>
</dbReference>
<dbReference type="SMART" id="SM00337">
    <property type="entry name" value="BCL"/>
    <property type="match status" value="1"/>
</dbReference>
<dbReference type="SUPFAM" id="SSF56854">
    <property type="entry name" value="Bcl-2 inhibitors of programmed cell death"/>
    <property type="match status" value="1"/>
</dbReference>
<dbReference type="PROSITE" id="PS50062">
    <property type="entry name" value="BCL2_FAMILY"/>
    <property type="match status" value="1"/>
</dbReference>
<dbReference type="PROSITE" id="PS01080">
    <property type="entry name" value="BH1"/>
    <property type="match status" value="1"/>
</dbReference>
<dbReference type="PROSITE" id="PS01258">
    <property type="entry name" value="BH2"/>
    <property type="match status" value="1"/>
</dbReference>
<comment type="function">
    <text evidence="3 4 5 6 8">Suppresses apoptosis in host cell to promote the viral replication (PubMed:18329683, PubMed:9123849). Has the ability to potentially bind to all the members of the proapoptotic Bcl-2 family (PubMed:18329683, PubMed:28053104). Inhibits autophagy by interacting with host Beclin 1 (BECN1) (PubMed:23228131, PubMed:31461953).</text>
</comment>
<comment type="subunit">
    <text evidence="4 5 6">Interacts with host BECN1 (via BH3 homology domain); this interaction allows the virus to inhibit BECN1, and thus autophagy (PubMed:23228131, PubMed:31461953). Interacts with host BID (PubMed:28053104). Interacts with host BAX (PubMed:28053104).</text>
</comment>
<comment type="subcellular location">
    <subcellularLocation>
        <location evidence="4">Host mitochondrion</location>
    </subcellularLocation>
    <subcellularLocation>
        <location evidence="4">Host endoplasmic reticulum</location>
    </subcellularLocation>
</comment>
<comment type="induction">
    <text evidence="1 7">Expressed in the early phase of the viral replicative cycle (PubMed:32075923). Expressed in the late phase of the viral replicative cycle (By similarity).</text>
</comment>
<comment type="similarity">
    <text evidence="9">Belongs to the Bcl-2 family.</text>
</comment>
<keyword id="KW-0002">3D-structure</keyword>
<keyword id="KW-0053">Apoptosis</keyword>
<keyword id="KW-0244">Early protein</keyword>
<keyword id="KW-1038">Host endoplasmic reticulum</keyword>
<keyword id="KW-1045">Host mitochondrion</keyword>
<keyword id="KW-0945">Host-virus interaction</keyword>
<keyword id="KW-1081">Inhibition of host apoptosis by viral BCL2-like protein</keyword>
<keyword id="KW-1083">Inhibition of host autophagy by virus</keyword>
<keyword id="KW-0426">Late protein</keyword>
<keyword id="KW-1119">Modulation of host cell apoptosis by virus</keyword>
<keyword id="KW-1185">Reference proteome</keyword>
<gene>
    <name type="ordered locus">Ba71V-041</name>
    <name type="ORF">A179L</name>
</gene>
<proteinExistence type="evidence at protein level"/>
<name>ARBH_ASFB7</name>
<reference key="1">
    <citation type="journal article" date="1995" name="Virology">
        <title>Analysis of the complete nucleotide sequence of African swine fever virus.</title>
        <authorList>
            <person name="Yanez R.J."/>
            <person name="Rodriguez J.M."/>
            <person name="Nogal M.L."/>
            <person name="Yuste L."/>
            <person name="Enriquez C."/>
            <person name="Rodriguez J.F."/>
            <person name="Vinuela E."/>
        </authorList>
    </citation>
    <scope>NUCLEOTIDE SEQUENCE [LARGE SCALE GENOMIC DNA]</scope>
</reference>
<reference key="2">
    <citation type="journal article" date="1997" name="Virology">
        <title>Inhibition of apoptosis by the African swine fever virus Bcl-2 homologue: role of the BH1 domain.</title>
        <authorList>
            <person name="Revilla Y."/>
            <person name="Cebrian A."/>
            <person name="Baixeras E."/>
            <person name="Martinez C."/>
            <person name="Vinuela E."/>
            <person name="Salas M.L."/>
        </authorList>
    </citation>
    <scope>FUNCTION</scope>
    <scope>MUTAGENESIS OF GLY-85</scope>
</reference>
<reference key="3">
    <citation type="journal article" date="2008" name="Virology">
        <title>A179L, a viral Bcl-2 homologue, targets the core Bcl-2 apoptotic machinery and its upstream BH3 activators with selective binding restrictions for Bid and Noxa.</title>
        <authorList>
            <person name="Galindo I."/>
            <person name="Hernaez B."/>
            <person name="Diaz-Gil G."/>
            <person name="Escribano J.M."/>
            <person name="Alonso C."/>
        </authorList>
    </citation>
    <scope>FUNCTION</scope>
</reference>
<reference key="4">
    <citation type="journal article" date="2013" name="Curr. Mol. Med.">
        <title>A179L, a new viral Bcl2 homolog targeting Beclin 1 autophagy related protein.</title>
        <authorList>
            <person name="Hernaez B."/>
            <person name="Cabezas M."/>
            <person name="Munoz-Moreno R."/>
            <person name="Galindo I."/>
            <person name="Cuesta-Geijo M.A."/>
            <person name="Alonso C."/>
        </authorList>
    </citation>
    <scope>INTERACTION WITH HOST BECN1</scope>
    <scope>SUBCELLULAR LOCATION</scope>
    <scope>FUNCTION</scope>
</reference>
<reference key="5">
    <citation type="journal article" date="2020" name="J. Virol.">
        <title>The African Swine Fever Virus Transcriptome.</title>
        <authorList>
            <person name="Cackett G."/>
            <person name="Matelska D."/>
            <person name="Sykora M."/>
            <person name="Portugal R."/>
            <person name="Malecki M."/>
            <person name="Baehler J."/>
            <person name="Dixon L."/>
            <person name="Werner F."/>
        </authorList>
    </citation>
    <scope>INDUCTION</scope>
</reference>
<reference evidence="10 11" key="6">
    <citation type="journal article" date="2017" name="J. Virol.">
        <title>Structural insight into African swine fever virus A179L-mediated inhibition of apoptosis.</title>
        <authorList>
            <person name="Banjara S."/>
            <person name="Caria S."/>
            <person name="Dixon L.K."/>
            <person name="Hinds M.G."/>
            <person name="Kvansakul M."/>
        </authorList>
    </citation>
    <scope>X-RAY CRYSTALLOGRAPHY (2.50 ANGSTROMS) OF 1-148</scope>
    <scope>INTERACTION WITH HOST BID</scope>
    <scope>INTERACTION WITH HOST BAX</scope>
    <scope>FUNCTION</scope>
</reference>
<reference evidence="12" key="7">
    <citation type="journal article" date="2019" name="Viruses">
        <title>Crystal Structure of African Swine Fever Virus A179L with the Autophagy Regulator Beclin.</title>
        <authorList>
            <person name="Banjara S."/>
            <person name="Shimmon G.L."/>
            <person name="Dixon L.K."/>
            <person name="Netherton C.L."/>
            <person name="Hinds M.G."/>
            <person name="Kvansakul M."/>
        </authorList>
    </citation>
    <scope>X-RAY CRYSTALLOGRAPHY (2.41 ANGSTROMS) OF 1-148</scope>
    <scope>FUNCTION</scope>
    <scope>INTERACTION WITH HOST BECN1</scope>
    <scope>BIOPHYSICOCHEMICAL PROPERTIES</scope>
</reference>
<feature type="chain" id="PRO_0000002811" description="Apoptosis regulator Bcl-2 homolog">
    <location>
        <begin position="1"/>
        <end position="179"/>
    </location>
</feature>
<feature type="short sequence motif" description="BH1" evidence="2">
    <location>
        <begin position="76"/>
        <end position="95"/>
    </location>
</feature>
<feature type="short sequence motif" description="BH2" evidence="2">
    <location>
        <begin position="126"/>
        <end position="141"/>
    </location>
</feature>
<feature type="mutagenesis site" description="Complete loss of apoptosis suppression." evidence="8">
    <original>G</original>
    <variation>A</variation>
    <location>
        <position position="85"/>
    </location>
</feature>
<feature type="helix" evidence="14">
    <location>
        <begin position="4"/>
        <end position="15"/>
    </location>
</feature>
<feature type="helix" evidence="14">
    <location>
        <begin position="17"/>
        <end position="23"/>
    </location>
</feature>
<feature type="turn" evidence="13">
    <location>
        <begin position="24"/>
        <end position="26"/>
    </location>
</feature>
<feature type="helix" evidence="14">
    <location>
        <begin position="29"/>
        <end position="31"/>
    </location>
</feature>
<feature type="helix" evidence="14">
    <location>
        <begin position="34"/>
        <end position="53"/>
    </location>
</feature>
<feature type="helix" evidence="14">
    <location>
        <begin position="63"/>
        <end position="79"/>
    </location>
</feature>
<feature type="helix" evidence="14">
    <location>
        <begin position="84"/>
        <end position="104"/>
    </location>
</feature>
<feature type="helix" evidence="14">
    <location>
        <begin position="109"/>
        <end position="123"/>
    </location>
</feature>
<feature type="helix" evidence="14">
    <location>
        <begin position="125"/>
        <end position="130"/>
    </location>
</feature>
<feature type="helix" evidence="14">
    <location>
        <begin position="133"/>
        <end position="144"/>
    </location>
</feature>
<organismHost>
    <name type="scientific">Ornithodoros</name>
    <name type="common">relapsing fever ticks</name>
    <dbReference type="NCBI Taxonomy" id="6937"/>
</organismHost>
<organismHost>
    <name type="scientific">Sus scrofa</name>
    <name type="common">Pig</name>
    <dbReference type="NCBI Taxonomy" id="9823"/>
</organismHost>
<organism>
    <name type="scientific">African swine fever virus (strain Badajoz 1971 Vero-adapted)</name>
    <name type="common">Ba71V</name>
    <name type="synonym">ASFV</name>
    <dbReference type="NCBI Taxonomy" id="10498"/>
    <lineage>
        <taxon>Viruses</taxon>
        <taxon>Varidnaviria</taxon>
        <taxon>Bamfordvirae</taxon>
        <taxon>Nucleocytoviricota</taxon>
        <taxon>Pokkesviricetes</taxon>
        <taxon>Asfuvirales</taxon>
        <taxon>Asfarviridae</taxon>
        <taxon>Asfivirus</taxon>
        <taxon>African swine fever virus</taxon>
    </lineage>
</organism>
<accession>P42485</accession>
<evidence type="ECO:0000250" key="1">
    <source>
        <dbReference type="UniProtKB" id="Q07819"/>
    </source>
</evidence>
<evidence type="ECO:0000255" key="2"/>
<evidence type="ECO:0000269" key="3">
    <source>
    </source>
</evidence>
<evidence type="ECO:0000269" key="4">
    <source>
    </source>
</evidence>
<evidence type="ECO:0000269" key="5">
    <source>
    </source>
</evidence>
<evidence type="ECO:0000269" key="6">
    <source>
    </source>
</evidence>
<evidence type="ECO:0000269" key="7">
    <source>
    </source>
</evidence>
<evidence type="ECO:0000269" key="8">
    <source>
    </source>
</evidence>
<evidence type="ECO:0000305" key="9"/>
<evidence type="ECO:0007744" key="10">
    <source>
        <dbReference type="PDB" id="5UA4"/>
    </source>
</evidence>
<evidence type="ECO:0007744" key="11">
    <source>
        <dbReference type="PDB" id="5UA5"/>
    </source>
</evidence>
<evidence type="ECO:0007744" key="12">
    <source>
        <dbReference type="PDB" id="6TZC"/>
    </source>
</evidence>
<evidence type="ECO:0007829" key="13">
    <source>
        <dbReference type="PDB" id="5UA5"/>
    </source>
</evidence>
<evidence type="ECO:0007829" key="14">
    <source>
        <dbReference type="PDB" id="6TZC"/>
    </source>
</evidence>
<protein>
    <recommendedName>
        <fullName>Apoptosis regulator Bcl-2 homolog</fullName>
    </recommendedName>
</protein>